<comment type="function">
    <text>Catalyzes the reaction of cyanate with bicarbonate to produce ammonia and carbon dioxide.</text>
</comment>
<comment type="catalytic activity">
    <reaction>
        <text>cyanate + hydrogencarbonate + 3 H(+) = NH4(+) + 2 CO2</text>
        <dbReference type="Rhea" id="RHEA:11120"/>
        <dbReference type="ChEBI" id="CHEBI:15378"/>
        <dbReference type="ChEBI" id="CHEBI:16526"/>
        <dbReference type="ChEBI" id="CHEBI:17544"/>
        <dbReference type="ChEBI" id="CHEBI:28938"/>
        <dbReference type="ChEBI" id="CHEBI:29195"/>
        <dbReference type="EC" id="4.2.1.104"/>
    </reaction>
</comment>
<comment type="subunit">
    <text>Homodecamer composed of five homodimers.</text>
</comment>
<comment type="similarity">
    <text evidence="1">Belongs to the cyanase family.</text>
</comment>
<organism>
    <name type="scientific">Escherichia coli (strain K12)</name>
    <dbReference type="NCBI Taxonomy" id="83333"/>
    <lineage>
        <taxon>Bacteria</taxon>
        <taxon>Pseudomonadati</taxon>
        <taxon>Pseudomonadota</taxon>
        <taxon>Gammaproteobacteria</taxon>
        <taxon>Enterobacterales</taxon>
        <taxon>Enterobacteriaceae</taxon>
        <taxon>Escherichia</taxon>
    </lineage>
</organism>
<name>CYNS_ECOLI</name>
<evidence type="ECO:0000305" key="1"/>
<evidence type="ECO:0007829" key="2">
    <source>
        <dbReference type="PDB" id="1DW9"/>
    </source>
</evidence>
<accession>P00816</accession>
<accession>Q2MC84</accession>
<protein>
    <recommendedName>
        <fullName>Cyanate hydratase</fullName>
        <shortName>Cyanase</shortName>
        <ecNumber>4.2.1.104</ecNumber>
    </recommendedName>
    <alternativeName>
        <fullName>Cyanate hydrolase</fullName>
    </alternativeName>
    <alternativeName>
        <fullName>Cyanate lyase</fullName>
    </alternativeName>
</protein>
<feature type="chain" id="PRO_0000187523" description="Cyanate hydratase">
    <location>
        <begin position="1"/>
        <end position="156"/>
    </location>
</feature>
<feature type="active site">
    <location>
        <position position="96"/>
    </location>
</feature>
<feature type="active site">
    <location>
        <position position="99"/>
    </location>
</feature>
<feature type="active site">
    <location>
        <position position="122"/>
    </location>
</feature>
<feature type="sequence conflict" description="In Ref. 3." evidence="1" ref="3">
    <original>D</original>
    <variation>N</variation>
    <location>
        <position position="34"/>
    </location>
</feature>
<feature type="sequence conflict" description="In Ref. 3." evidence="1" ref="3">
    <original>D</original>
    <variation>N</variation>
    <location>
        <position position="68"/>
    </location>
</feature>
<feature type="sequence conflict" description="In Ref. 3." evidence="1" ref="3">
    <original>L</original>
    <variation>S</variation>
    <location>
        <position position="74"/>
    </location>
</feature>
<feature type="sequence conflict" description="In Ref. 3." evidence="1" ref="3">
    <original>N</original>
    <variation>D</variation>
    <location>
        <position position="125"/>
    </location>
</feature>
<feature type="helix" evidence="2">
    <location>
        <begin position="9"/>
        <end position="24"/>
    </location>
</feature>
<feature type="helix" evidence="2">
    <location>
        <begin position="29"/>
        <end position="33"/>
    </location>
</feature>
<feature type="strand" evidence="2">
    <location>
        <begin position="36"/>
        <end position="38"/>
    </location>
</feature>
<feature type="helix" evidence="2">
    <location>
        <begin position="40"/>
        <end position="47"/>
    </location>
</feature>
<feature type="helix" evidence="2">
    <location>
        <begin position="55"/>
        <end position="64"/>
    </location>
</feature>
<feature type="helix" evidence="2">
    <location>
        <begin position="69"/>
        <end position="74"/>
    </location>
</feature>
<feature type="strand" evidence="2">
    <location>
        <begin position="85"/>
        <end position="88"/>
    </location>
</feature>
<feature type="helix" evidence="2">
    <location>
        <begin position="92"/>
        <end position="115"/>
    </location>
</feature>
<feature type="strand" evidence="2">
    <location>
        <begin position="118"/>
        <end position="134"/>
    </location>
</feature>
<feature type="strand" evidence="2">
    <location>
        <begin position="138"/>
        <end position="152"/>
    </location>
</feature>
<keyword id="KW-0002">3D-structure</keyword>
<keyword id="KW-0903">Direct protein sequencing</keyword>
<keyword id="KW-0456">Lyase</keyword>
<keyword id="KW-1185">Reference proteome</keyword>
<reference key="1">
    <citation type="journal article" date="1983" name="J. Biol. Chem.">
        <title>The amino acid sequence of Escherichia coli cyanase.</title>
        <authorList>
            <person name="Chin C.C.Q."/>
            <person name="Anderson P.M."/>
            <person name="Wold F."/>
        </authorList>
    </citation>
    <scope>PROTEIN SEQUENCE</scope>
</reference>
<reference key="2">
    <citation type="journal article" date="1987" name="J. Bacteriol.">
        <title>Characterization of high-level expression and sequencing of the Escherichia coli K-12 cynS gene encoding cyanase.</title>
        <authorList>
            <person name="Sung Y.-C."/>
            <person name="Anderson P.M."/>
            <person name="Fuchs J.A."/>
        </authorList>
    </citation>
    <scope>NUCLEOTIDE SEQUENCE [GENOMIC DNA]</scope>
    <source>
        <strain>K12</strain>
    </source>
</reference>
<reference key="3">
    <citation type="journal article" date="1988" name="J. Biol. Chem.">
        <title>Characterization of the cyn operon in Escherichia coli K12.</title>
        <authorList>
            <person name="Sung Y.-C."/>
            <person name="Fuchs J.A."/>
        </authorList>
    </citation>
    <scope>NUCLEOTIDE SEQUENCE [GENOMIC DNA]</scope>
</reference>
<reference key="4">
    <citation type="submission" date="1997-01" db="EMBL/GenBank/DDBJ databases">
        <title>Sequence of minutes 4-25 of Escherichia coli.</title>
        <authorList>
            <person name="Chung E."/>
            <person name="Allen E."/>
            <person name="Araujo R."/>
            <person name="Aparicio A.M."/>
            <person name="Davis K."/>
            <person name="Duncan M."/>
            <person name="Federspiel N."/>
            <person name="Hyman R."/>
            <person name="Kalman S."/>
            <person name="Komp C."/>
            <person name="Kurdi O."/>
            <person name="Lew H."/>
            <person name="Lin D."/>
            <person name="Namath A."/>
            <person name="Oefner P."/>
            <person name="Roberts D."/>
            <person name="Schramm S."/>
            <person name="Davis R.W."/>
        </authorList>
    </citation>
    <scope>NUCLEOTIDE SEQUENCE [LARGE SCALE GENOMIC DNA]</scope>
    <source>
        <strain>K12 / MG1655 / ATCC 47076</strain>
    </source>
</reference>
<reference key="5">
    <citation type="journal article" date="1997" name="Science">
        <title>The complete genome sequence of Escherichia coli K-12.</title>
        <authorList>
            <person name="Blattner F.R."/>
            <person name="Plunkett G. III"/>
            <person name="Bloch C.A."/>
            <person name="Perna N.T."/>
            <person name="Burland V."/>
            <person name="Riley M."/>
            <person name="Collado-Vides J."/>
            <person name="Glasner J.D."/>
            <person name="Rode C.K."/>
            <person name="Mayhew G.F."/>
            <person name="Gregor J."/>
            <person name="Davis N.W."/>
            <person name="Kirkpatrick H.A."/>
            <person name="Goeden M.A."/>
            <person name="Rose D.J."/>
            <person name="Mau B."/>
            <person name="Shao Y."/>
        </authorList>
    </citation>
    <scope>NUCLEOTIDE SEQUENCE [LARGE SCALE GENOMIC DNA]</scope>
    <source>
        <strain>K12 / MG1655 / ATCC 47076</strain>
    </source>
</reference>
<reference key="6">
    <citation type="journal article" date="2006" name="Mol. Syst. Biol.">
        <title>Highly accurate genome sequences of Escherichia coli K-12 strains MG1655 and W3110.</title>
        <authorList>
            <person name="Hayashi K."/>
            <person name="Morooka N."/>
            <person name="Yamamoto Y."/>
            <person name="Fujita K."/>
            <person name="Isono K."/>
            <person name="Choi S."/>
            <person name="Ohtsubo E."/>
            <person name="Baba T."/>
            <person name="Wanner B.L."/>
            <person name="Mori H."/>
            <person name="Horiuchi T."/>
        </authorList>
    </citation>
    <scope>NUCLEOTIDE SEQUENCE [LARGE SCALE GENOMIC DNA]</scope>
    <source>
        <strain>K12 / W3110 / ATCC 27325 / DSM 5911</strain>
    </source>
</reference>
<reference key="7">
    <citation type="journal article" date="1987" name="J. Biol. Chem.">
        <title>Structural properties of cyanase. Denaturation, renaturation, and role of sulfhydryls and oligomeric structure in catalytic activity.</title>
        <authorList>
            <person name="Little R.M."/>
            <person name="Anderson P.M."/>
        </authorList>
    </citation>
    <scope>CHARACTERIZATION</scope>
</reference>
<reference key="8">
    <citation type="journal article" date="1997" name="Electrophoresis">
        <title>Escherichia coli proteome analysis using the gene-protein database.</title>
        <authorList>
            <person name="VanBogelen R.A."/>
            <person name="Abshire K.Z."/>
            <person name="Moldover B."/>
            <person name="Olson E.R."/>
            <person name="Neidhardt F.C."/>
        </authorList>
    </citation>
    <scope>IDENTIFICATION BY 2D-GEL</scope>
</reference>
<reference key="9">
    <citation type="journal article" date="2000" name="Structure">
        <title>Structure of cyanase reveals that a novel dimeric and decameric arrangement of subunits is required for formation of the enzyme active site.</title>
        <authorList>
            <person name="Walsh M.A."/>
            <person name="Otwinowski Z."/>
            <person name="Perrakis A."/>
            <person name="Anderson P.M."/>
            <person name="Joachimiak A."/>
        </authorList>
    </citation>
    <scope>X-RAY CRYSTALLOGRAPHY (1.65 ANGSTROMS)</scope>
</reference>
<sequence length="156" mass="17049">MIQSQINRNIRLDLADAILLSKAKKDLSFAEIADGTGLAEAFVTAALLGQQALPADAARLVGAKLDLDEDSILLLQMIPLRGCIDDRIPTDPTMYRFYEMLQVYGTTLKALVHEKFGDGIISAINFKLDVKKVADPEGGERAVITLDGKYLPTKPF</sequence>
<gene>
    <name type="primary">cynS</name>
    <name type="synonym">cnt</name>
    <name type="ordered locus">b0340</name>
    <name type="ordered locus">JW0331</name>
</gene>
<proteinExistence type="evidence at protein level"/>
<dbReference type="EC" id="4.2.1.104"/>
<dbReference type="EMBL" id="M17891">
    <property type="protein sequence ID" value="AAA23629.1"/>
    <property type="molecule type" value="Genomic_DNA"/>
</dbReference>
<dbReference type="EMBL" id="M23219">
    <property type="protein sequence ID" value="AAA23626.1"/>
    <property type="molecule type" value="Genomic_DNA"/>
</dbReference>
<dbReference type="EMBL" id="U73857">
    <property type="protein sequence ID" value="AAB18064.1"/>
    <property type="molecule type" value="Genomic_DNA"/>
</dbReference>
<dbReference type="EMBL" id="U00096">
    <property type="protein sequence ID" value="AAC73443.1"/>
    <property type="molecule type" value="Genomic_DNA"/>
</dbReference>
<dbReference type="EMBL" id="AP009048">
    <property type="protein sequence ID" value="BAE76122.1"/>
    <property type="molecule type" value="Genomic_DNA"/>
</dbReference>
<dbReference type="PIR" id="A91850">
    <property type="entry name" value="YNEC"/>
</dbReference>
<dbReference type="RefSeq" id="NP_414874.1">
    <property type="nucleotide sequence ID" value="NC_000913.3"/>
</dbReference>
<dbReference type="RefSeq" id="WP_000616243.1">
    <property type="nucleotide sequence ID" value="NZ_SSZK01000061.1"/>
</dbReference>
<dbReference type="PDB" id="1DW9">
    <property type="method" value="X-ray"/>
    <property type="resolution" value="1.65 A"/>
    <property type="chains" value="A/B/C/D/E/F/G/H/I/J=1-156"/>
</dbReference>
<dbReference type="PDB" id="1DWK">
    <property type="method" value="X-ray"/>
    <property type="resolution" value="1.65 A"/>
    <property type="chains" value="A/B/C/D/E/F/G/H/I/J=1-156"/>
</dbReference>
<dbReference type="PDB" id="2IU7">
    <property type="method" value="X-ray"/>
    <property type="resolution" value="1.91 A"/>
    <property type="chains" value="A/B/C/D/E/F/G/H/I/J=1-156"/>
</dbReference>
<dbReference type="PDB" id="2IUO">
    <property type="method" value="X-ray"/>
    <property type="resolution" value="1.90 A"/>
    <property type="chains" value="A/B/C/D/E/F/G/H/I/J=1-156"/>
</dbReference>
<dbReference type="PDB" id="2IV1">
    <property type="method" value="X-ray"/>
    <property type="resolution" value="1.88 A"/>
    <property type="chains" value="A/B/C/D/E/F/G/H/I/J=1-156"/>
</dbReference>
<dbReference type="PDB" id="2IVB">
    <property type="method" value="X-ray"/>
    <property type="resolution" value="1.95 A"/>
    <property type="chains" value="A/B/C/D/E/F/G/H/I/J=1-156"/>
</dbReference>
<dbReference type="PDB" id="2IVG">
    <property type="method" value="X-ray"/>
    <property type="resolution" value="1.87 A"/>
    <property type="chains" value="A/B/C/D/E/F/G/H/I/J=1-156"/>
</dbReference>
<dbReference type="PDB" id="2IVQ">
    <property type="method" value="X-ray"/>
    <property type="resolution" value="2.10 A"/>
    <property type="chains" value="A/B/C/D/E/F/G/H/I/J=1-156"/>
</dbReference>
<dbReference type="PDB" id="8K6G">
    <property type="method" value="X-ray"/>
    <property type="resolution" value="1.50 A"/>
    <property type="chains" value="A/B/C/D/E/F/G/H/I/J=1-156"/>
</dbReference>
<dbReference type="PDB" id="8K6H">
    <property type="method" value="X-ray"/>
    <property type="resolution" value="1.50 A"/>
    <property type="chains" value="A/B/C/D/E/F/G/H/I/J=1-156"/>
</dbReference>
<dbReference type="PDB" id="8K6S">
    <property type="method" value="X-ray"/>
    <property type="resolution" value="1.60 A"/>
    <property type="chains" value="A/B/C/D/E/F/G/H/I/J=1-156"/>
</dbReference>
<dbReference type="PDB" id="8K6U">
    <property type="method" value="X-ray"/>
    <property type="resolution" value="1.90 A"/>
    <property type="chains" value="A/B/C/D/E/F/G/H/I/J=1-156"/>
</dbReference>
<dbReference type="PDB" id="8K6X">
    <property type="method" value="X-ray"/>
    <property type="resolution" value="1.80 A"/>
    <property type="chains" value="A/B/C/D/E/F/G/H/I/J=1-156"/>
</dbReference>
<dbReference type="PDBsum" id="1DW9"/>
<dbReference type="PDBsum" id="1DWK"/>
<dbReference type="PDBsum" id="2IU7"/>
<dbReference type="PDBsum" id="2IUO"/>
<dbReference type="PDBsum" id="2IV1"/>
<dbReference type="PDBsum" id="2IVB"/>
<dbReference type="PDBsum" id="2IVG"/>
<dbReference type="PDBsum" id="2IVQ"/>
<dbReference type="PDBsum" id="8K6G"/>
<dbReference type="PDBsum" id="8K6H"/>
<dbReference type="PDBsum" id="8K6S"/>
<dbReference type="PDBsum" id="8K6U"/>
<dbReference type="PDBsum" id="8K6X"/>
<dbReference type="SMR" id="P00816"/>
<dbReference type="BioGRID" id="4263187">
    <property type="interactions" value="9"/>
</dbReference>
<dbReference type="DIP" id="DIP-9365N"/>
<dbReference type="FunCoup" id="P00816">
    <property type="interactions" value="271"/>
</dbReference>
<dbReference type="IntAct" id="P00816">
    <property type="interactions" value="3"/>
</dbReference>
<dbReference type="STRING" id="511145.b0340"/>
<dbReference type="PaxDb" id="511145-b0340"/>
<dbReference type="EnsemblBacteria" id="AAC73443">
    <property type="protein sequence ID" value="AAC73443"/>
    <property type="gene ID" value="b0340"/>
</dbReference>
<dbReference type="GeneID" id="948998"/>
<dbReference type="KEGG" id="ecj:JW0331"/>
<dbReference type="KEGG" id="eco:b0340"/>
<dbReference type="KEGG" id="ecoc:C3026_01665"/>
<dbReference type="KEGG" id="ecoc:C3026_24835"/>
<dbReference type="PATRIC" id="fig|1411691.4.peg.1937"/>
<dbReference type="EchoBASE" id="EB0172"/>
<dbReference type="eggNOG" id="COG1513">
    <property type="taxonomic scope" value="Bacteria"/>
</dbReference>
<dbReference type="HOGENOM" id="CLU_103452_1_1_6"/>
<dbReference type="InParanoid" id="P00816"/>
<dbReference type="OMA" id="YELVMIN"/>
<dbReference type="OrthoDB" id="9785870at2"/>
<dbReference type="PhylomeDB" id="P00816"/>
<dbReference type="BioCyc" id="EcoCyc:CYANLY-MONOMER"/>
<dbReference type="BioCyc" id="MetaCyc:CYANLY-MONOMER"/>
<dbReference type="EvolutionaryTrace" id="P00816"/>
<dbReference type="PRO" id="PR:P00816"/>
<dbReference type="Proteomes" id="UP000000625">
    <property type="component" value="Chromosome"/>
</dbReference>
<dbReference type="GO" id="GO:0008824">
    <property type="term" value="F:cyanate hydratase activity"/>
    <property type="evidence" value="ECO:0000314"/>
    <property type="project" value="EcoCyc"/>
</dbReference>
<dbReference type="GO" id="GO:0003677">
    <property type="term" value="F:DNA binding"/>
    <property type="evidence" value="ECO:0007669"/>
    <property type="project" value="InterPro"/>
</dbReference>
<dbReference type="GO" id="GO:0009440">
    <property type="term" value="P:cyanate catabolic process"/>
    <property type="evidence" value="ECO:0000315"/>
    <property type="project" value="EcoCyc"/>
</dbReference>
<dbReference type="CDD" id="cd00559">
    <property type="entry name" value="Cyanase_C"/>
    <property type="match status" value="1"/>
</dbReference>
<dbReference type="FunFam" id="3.30.1160.10:FF:000001">
    <property type="entry name" value="Cyanate hydratase"/>
    <property type="match status" value="1"/>
</dbReference>
<dbReference type="Gene3D" id="3.30.1160.10">
    <property type="entry name" value="Cyanate lyase, C-terminal domain"/>
    <property type="match status" value="1"/>
</dbReference>
<dbReference type="Gene3D" id="1.10.260.40">
    <property type="entry name" value="lambda repressor-like DNA-binding domains"/>
    <property type="match status" value="1"/>
</dbReference>
<dbReference type="HAMAP" id="MF_00535">
    <property type="entry name" value="Cyanate_hydrat"/>
    <property type="match status" value="1"/>
</dbReference>
<dbReference type="InterPro" id="IPR008076">
    <property type="entry name" value="Cyanase"/>
</dbReference>
<dbReference type="InterPro" id="IPR003712">
    <property type="entry name" value="Cyanate_lyase_C"/>
</dbReference>
<dbReference type="InterPro" id="IPR036581">
    <property type="entry name" value="Cyanate_lyase_C_sf"/>
</dbReference>
<dbReference type="InterPro" id="IPR048564">
    <property type="entry name" value="CYNS_N"/>
</dbReference>
<dbReference type="InterPro" id="IPR010982">
    <property type="entry name" value="Lambda_DNA-bd_dom_sf"/>
</dbReference>
<dbReference type="NCBIfam" id="TIGR00673">
    <property type="entry name" value="cynS"/>
    <property type="match status" value="1"/>
</dbReference>
<dbReference type="NCBIfam" id="NF002773">
    <property type="entry name" value="PRK02866.1"/>
    <property type="match status" value="1"/>
</dbReference>
<dbReference type="PANTHER" id="PTHR34186">
    <property type="entry name" value="CYANATE HYDRATASE"/>
    <property type="match status" value="1"/>
</dbReference>
<dbReference type="PANTHER" id="PTHR34186:SF2">
    <property type="entry name" value="CYANATE HYDRATASE"/>
    <property type="match status" value="1"/>
</dbReference>
<dbReference type="Pfam" id="PF02560">
    <property type="entry name" value="Cyanate_lyase"/>
    <property type="match status" value="1"/>
</dbReference>
<dbReference type="Pfam" id="PF21291">
    <property type="entry name" value="CYNS_N"/>
    <property type="match status" value="1"/>
</dbReference>
<dbReference type="PIRSF" id="PIRSF001263">
    <property type="entry name" value="Cyanate_hydratas"/>
    <property type="match status" value="1"/>
</dbReference>
<dbReference type="PRINTS" id="PR01693">
    <property type="entry name" value="CYANASE"/>
</dbReference>
<dbReference type="SMART" id="SM01116">
    <property type="entry name" value="Cyanate_lyase"/>
    <property type="match status" value="1"/>
</dbReference>
<dbReference type="SUPFAM" id="SSF55234">
    <property type="entry name" value="Cyanase C-terminal domain"/>
    <property type="match status" value="1"/>
</dbReference>
<dbReference type="SUPFAM" id="SSF47413">
    <property type="entry name" value="lambda repressor-like DNA-binding domains"/>
    <property type="match status" value="1"/>
</dbReference>